<organism>
    <name type="scientific">Blochmanniella pennsylvanica (strain BPEN)</name>
    <dbReference type="NCBI Taxonomy" id="291272"/>
    <lineage>
        <taxon>Bacteria</taxon>
        <taxon>Pseudomonadati</taxon>
        <taxon>Pseudomonadota</taxon>
        <taxon>Gammaproteobacteria</taxon>
        <taxon>Enterobacterales</taxon>
        <taxon>Enterobacteriaceae</taxon>
        <taxon>ant endosymbionts</taxon>
        <taxon>Candidatus Blochmanniella</taxon>
    </lineage>
</organism>
<name>RL25_BLOPB</name>
<gene>
    <name evidence="1" type="primary">rplY</name>
    <name type="ordered locus">BPEN_488</name>
</gene>
<dbReference type="EMBL" id="CP000016">
    <property type="protein sequence ID" value="AAZ41103.1"/>
    <property type="molecule type" value="Genomic_DNA"/>
</dbReference>
<dbReference type="RefSeq" id="WP_011283014.1">
    <property type="nucleotide sequence ID" value="NC_007292.1"/>
</dbReference>
<dbReference type="SMR" id="Q492J6"/>
<dbReference type="STRING" id="291272.BPEN_488"/>
<dbReference type="KEGG" id="bpn:BPEN_488"/>
<dbReference type="eggNOG" id="COG1825">
    <property type="taxonomic scope" value="Bacteria"/>
</dbReference>
<dbReference type="HOGENOM" id="CLU_137946_0_0_6"/>
<dbReference type="OrthoDB" id="9806411at2"/>
<dbReference type="Proteomes" id="UP000007794">
    <property type="component" value="Chromosome"/>
</dbReference>
<dbReference type="GO" id="GO:1990904">
    <property type="term" value="C:ribonucleoprotein complex"/>
    <property type="evidence" value="ECO:0007669"/>
    <property type="project" value="UniProtKB-KW"/>
</dbReference>
<dbReference type="GO" id="GO:0005840">
    <property type="term" value="C:ribosome"/>
    <property type="evidence" value="ECO:0007669"/>
    <property type="project" value="UniProtKB-KW"/>
</dbReference>
<dbReference type="GO" id="GO:0008097">
    <property type="term" value="F:5S rRNA binding"/>
    <property type="evidence" value="ECO:0007669"/>
    <property type="project" value="InterPro"/>
</dbReference>
<dbReference type="GO" id="GO:0003735">
    <property type="term" value="F:structural constituent of ribosome"/>
    <property type="evidence" value="ECO:0007669"/>
    <property type="project" value="InterPro"/>
</dbReference>
<dbReference type="GO" id="GO:0006412">
    <property type="term" value="P:translation"/>
    <property type="evidence" value="ECO:0007669"/>
    <property type="project" value="UniProtKB-UniRule"/>
</dbReference>
<dbReference type="CDD" id="cd00495">
    <property type="entry name" value="Ribosomal_L25_TL5_CTC"/>
    <property type="match status" value="1"/>
</dbReference>
<dbReference type="Gene3D" id="2.40.240.10">
    <property type="entry name" value="Ribosomal Protein L25, Chain P"/>
    <property type="match status" value="1"/>
</dbReference>
<dbReference type="HAMAP" id="MF_01336">
    <property type="entry name" value="Ribosomal_bL25"/>
    <property type="match status" value="1"/>
</dbReference>
<dbReference type="InterPro" id="IPR020056">
    <property type="entry name" value="Rbsml_bL25/Gln-tRNA_synth_N"/>
</dbReference>
<dbReference type="InterPro" id="IPR011035">
    <property type="entry name" value="Ribosomal_bL25/Gln-tRNA_synth"/>
</dbReference>
<dbReference type="InterPro" id="IPR020055">
    <property type="entry name" value="Ribosomal_bL25_short"/>
</dbReference>
<dbReference type="InterPro" id="IPR029751">
    <property type="entry name" value="Ribosomal_L25_dom"/>
</dbReference>
<dbReference type="NCBIfam" id="NF004612">
    <property type="entry name" value="PRK05943.1"/>
    <property type="match status" value="1"/>
</dbReference>
<dbReference type="Pfam" id="PF01386">
    <property type="entry name" value="Ribosomal_L25p"/>
    <property type="match status" value="1"/>
</dbReference>
<dbReference type="SUPFAM" id="SSF50715">
    <property type="entry name" value="Ribosomal protein L25-like"/>
    <property type="match status" value="1"/>
</dbReference>
<evidence type="ECO:0000255" key="1">
    <source>
        <dbReference type="HAMAP-Rule" id="MF_01336"/>
    </source>
</evidence>
<evidence type="ECO:0000305" key="2"/>
<comment type="function">
    <text evidence="1">This is one of the proteins that binds to the 5S RNA in the ribosome where it forms part of the central protuberance.</text>
</comment>
<comment type="subunit">
    <text evidence="1">Part of the 50S ribosomal subunit; part of the 5S rRNA/L5/L18/L25 subcomplex. Contacts the 5S rRNA. Binds to the 5S rRNA independently of L5 and L18.</text>
</comment>
<comment type="similarity">
    <text evidence="1">Belongs to the bacterial ribosomal protein bL25 family.</text>
</comment>
<accession>Q492J6</accession>
<keyword id="KW-1185">Reference proteome</keyword>
<keyword id="KW-0687">Ribonucleoprotein</keyword>
<keyword id="KW-0689">Ribosomal protein</keyword>
<keyword id="KW-0694">RNA-binding</keyword>
<keyword id="KW-0699">rRNA-binding</keyword>
<reference key="1">
    <citation type="journal article" date="2005" name="Genome Res.">
        <title>Genome sequence of Blochmannia pennsylvanicus indicates parallel evolutionary trends among bacterial mutualists of insects.</title>
        <authorList>
            <person name="Degnan P.H."/>
            <person name="Lazarus A.B."/>
            <person name="Wernegreen J.J."/>
        </authorList>
    </citation>
    <scope>NUCLEOTIDE SEQUENCE [LARGE SCALE GENOMIC DNA]</scope>
    <source>
        <strain>BPEN</strain>
    </source>
</reference>
<feature type="chain" id="PRO_0000243103" description="Large ribosomal subunit protein bL25">
    <location>
        <begin position="1"/>
        <end position="97"/>
    </location>
</feature>
<sequence>MLTIKANLRIYHKKGATRRLRKQNKCPAVIYNRGQEPSIPIILNQNDILHPEAVIQLYKNNVILLFIENQQPITVKVQELQYHPFKSKLIHIDFTRV</sequence>
<proteinExistence type="inferred from homology"/>
<protein>
    <recommendedName>
        <fullName evidence="1">Large ribosomal subunit protein bL25</fullName>
    </recommendedName>
    <alternativeName>
        <fullName evidence="2">50S ribosomal protein L25</fullName>
    </alternativeName>
</protein>